<organism>
    <name type="scientific">Cereibacter sphaeroides (strain ATCC 17023 / DSM 158 / JCM 6121 / CCUG 31486 / LMG 2827 / NBRC 12203 / NCIMB 8253 / ATH 2.4.1.)</name>
    <name type="common">Rhodobacter sphaeroides</name>
    <dbReference type="NCBI Taxonomy" id="272943"/>
    <lineage>
        <taxon>Bacteria</taxon>
        <taxon>Pseudomonadati</taxon>
        <taxon>Pseudomonadota</taxon>
        <taxon>Alphaproteobacteria</taxon>
        <taxon>Rhodobacterales</taxon>
        <taxon>Paracoccaceae</taxon>
        <taxon>Cereibacter</taxon>
    </lineage>
</organism>
<protein>
    <recommendedName>
        <fullName evidence="1">Shikimate kinase</fullName>
        <shortName evidence="1">SK</shortName>
        <ecNumber evidence="1">2.7.1.71</ecNumber>
    </recommendedName>
</protein>
<proteinExistence type="inferred from homology"/>
<sequence length="199" mass="22077">MKVGAEVRRRGNREDGRQVMARLKKTVVMVGMMGAGKTAVGSALARGLNVPFLDSDEEIERAANRTIAEIFARDGEPFFREKESQVLARLLRGSPCVLSTGGGAFMAEGNRRMIREQGVSVWLKADLDVLWHRVRHKATRPLLRTPNPRETLRALLEARDPVYAQADLAVESGEGTVEQMAVRVREALATRPDVLETDE</sequence>
<dbReference type="EC" id="2.7.1.71" evidence="1"/>
<dbReference type="EMBL" id="CP000143">
    <property type="protein sequence ID" value="ABA78995.2"/>
    <property type="molecule type" value="Genomic_DNA"/>
</dbReference>
<dbReference type="RefSeq" id="WP_017140213.1">
    <property type="nucleotide sequence ID" value="NZ_CP030271.1"/>
</dbReference>
<dbReference type="RefSeq" id="YP_352896.2">
    <property type="nucleotide sequence ID" value="NC_007493.2"/>
</dbReference>
<dbReference type="SMR" id="Q3J2I9"/>
<dbReference type="STRING" id="272943.RSP_2817"/>
<dbReference type="EnsemblBacteria" id="ABA78995">
    <property type="protein sequence ID" value="ABA78995"/>
    <property type="gene ID" value="RSP_2817"/>
</dbReference>
<dbReference type="GeneID" id="3720573"/>
<dbReference type="KEGG" id="rsp:RSP_2817"/>
<dbReference type="PATRIC" id="fig|272943.9.peg.1765"/>
<dbReference type="eggNOG" id="COG0703">
    <property type="taxonomic scope" value="Bacteria"/>
</dbReference>
<dbReference type="OrthoDB" id="9800332at2"/>
<dbReference type="UniPathway" id="UPA00053">
    <property type="reaction ID" value="UER00088"/>
</dbReference>
<dbReference type="Proteomes" id="UP000002703">
    <property type="component" value="Chromosome 1"/>
</dbReference>
<dbReference type="GO" id="GO:0005829">
    <property type="term" value="C:cytosol"/>
    <property type="evidence" value="ECO:0007669"/>
    <property type="project" value="TreeGrafter"/>
</dbReference>
<dbReference type="GO" id="GO:0005524">
    <property type="term" value="F:ATP binding"/>
    <property type="evidence" value="ECO:0007669"/>
    <property type="project" value="UniProtKB-UniRule"/>
</dbReference>
<dbReference type="GO" id="GO:0000287">
    <property type="term" value="F:magnesium ion binding"/>
    <property type="evidence" value="ECO:0007669"/>
    <property type="project" value="UniProtKB-UniRule"/>
</dbReference>
<dbReference type="GO" id="GO:0004765">
    <property type="term" value="F:shikimate kinase activity"/>
    <property type="evidence" value="ECO:0007669"/>
    <property type="project" value="UniProtKB-UniRule"/>
</dbReference>
<dbReference type="GO" id="GO:0008652">
    <property type="term" value="P:amino acid biosynthetic process"/>
    <property type="evidence" value="ECO:0007669"/>
    <property type="project" value="UniProtKB-KW"/>
</dbReference>
<dbReference type="GO" id="GO:0009073">
    <property type="term" value="P:aromatic amino acid family biosynthetic process"/>
    <property type="evidence" value="ECO:0007669"/>
    <property type="project" value="UniProtKB-KW"/>
</dbReference>
<dbReference type="GO" id="GO:0009423">
    <property type="term" value="P:chorismate biosynthetic process"/>
    <property type="evidence" value="ECO:0007669"/>
    <property type="project" value="UniProtKB-UniRule"/>
</dbReference>
<dbReference type="CDD" id="cd00464">
    <property type="entry name" value="SK"/>
    <property type="match status" value="1"/>
</dbReference>
<dbReference type="Gene3D" id="3.40.50.300">
    <property type="entry name" value="P-loop containing nucleotide triphosphate hydrolases"/>
    <property type="match status" value="1"/>
</dbReference>
<dbReference type="HAMAP" id="MF_00109">
    <property type="entry name" value="Shikimate_kinase"/>
    <property type="match status" value="1"/>
</dbReference>
<dbReference type="InterPro" id="IPR027417">
    <property type="entry name" value="P-loop_NTPase"/>
</dbReference>
<dbReference type="InterPro" id="IPR031322">
    <property type="entry name" value="Shikimate/glucono_kinase"/>
</dbReference>
<dbReference type="InterPro" id="IPR000623">
    <property type="entry name" value="Shikimate_kinase/TSH1"/>
</dbReference>
<dbReference type="InterPro" id="IPR023000">
    <property type="entry name" value="Shikimate_kinase_CS"/>
</dbReference>
<dbReference type="NCBIfam" id="NF010552">
    <property type="entry name" value="PRK13946.1"/>
    <property type="match status" value="1"/>
</dbReference>
<dbReference type="PANTHER" id="PTHR21087">
    <property type="entry name" value="SHIKIMATE KINASE"/>
    <property type="match status" value="1"/>
</dbReference>
<dbReference type="PANTHER" id="PTHR21087:SF16">
    <property type="entry name" value="SHIKIMATE KINASE 1, CHLOROPLASTIC"/>
    <property type="match status" value="1"/>
</dbReference>
<dbReference type="Pfam" id="PF01202">
    <property type="entry name" value="SKI"/>
    <property type="match status" value="1"/>
</dbReference>
<dbReference type="PRINTS" id="PR01100">
    <property type="entry name" value="SHIKIMTKNASE"/>
</dbReference>
<dbReference type="SUPFAM" id="SSF52540">
    <property type="entry name" value="P-loop containing nucleoside triphosphate hydrolases"/>
    <property type="match status" value="1"/>
</dbReference>
<dbReference type="PROSITE" id="PS01128">
    <property type="entry name" value="SHIKIMATE_KINASE"/>
    <property type="match status" value="1"/>
</dbReference>
<accession>Q3J2I9</accession>
<name>AROK_CERS4</name>
<evidence type="ECO:0000255" key="1">
    <source>
        <dbReference type="HAMAP-Rule" id="MF_00109"/>
    </source>
</evidence>
<comment type="function">
    <text evidence="1">Catalyzes the specific phosphorylation of the 3-hydroxyl group of shikimic acid using ATP as a cosubstrate.</text>
</comment>
<comment type="catalytic activity">
    <reaction evidence="1">
        <text>shikimate + ATP = 3-phosphoshikimate + ADP + H(+)</text>
        <dbReference type="Rhea" id="RHEA:13121"/>
        <dbReference type="ChEBI" id="CHEBI:15378"/>
        <dbReference type="ChEBI" id="CHEBI:30616"/>
        <dbReference type="ChEBI" id="CHEBI:36208"/>
        <dbReference type="ChEBI" id="CHEBI:145989"/>
        <dbReference type="ChEBI" id="CHEBI:456216"/>
        <dbReference type="EC" id="2.7.1.71"/>
    </reaction>
</comment>
<comment type="cofactor">
    <cofactor evidence="1">
        <name>Mg(2+)</name>
        <dbReference type="ChEBI" id="CHEBI:18420"/>
    </cofactor>
    <text evidence="1">Binds 1 Mg(2+) ion per subunit.</text>
</comment>
<comment type="pathway">
    <text evidence="1">Metabolic intermediate biosynthesis; chorismate biosynthesis; chorismate from D-erythrose 4-phosphate and phosphoenolpyruvate: step 5/7.</text>
</comment>
<comment type="subunit">
    <text evidence="1">Monomer.</text>
</comment>
<comment type="subcellular location">
    <subcellularLocation>
        <location evidence="1">Cytoplasm</location>
    </subcellularLocation>
</comment>
<comment type="similarity">
    <text evidence="1">Belongs to the shikimate kinase family.</text>
</comment>
<reference key="1">
    <citation type="submission" date="2005-09" db="EMBL/GenBank/DDBJ databases">
        <title>Complete sequence of chromosome 1 of Rhodobacter sphaeroides 2.4.1.</title>
        <authorList>
            <person name="Copeland A."/>
            <person name="Lucas S."/>
            <person name="Lapidus A."/>
            <person name="Barry K."/>
            <person name="Detter J.C."/>
            <person name="Glavina T."/>
            <person name="Hammon N."/>
            <person name="Israni S."/>
            <person name="Pitluck S."/>
            <person name="Richardson P."/>
            <person name="Mackenzie C."/>
            <person name="Choudhary M."/>
            <person name="Larimer F."/>
            <person name="Hauser L.J."/>
            <person name="Land M."/>
            <person name="Donohue T.J."/>
            <person name="Kaplan S."/>
        </authorList>
    </citation>
    <scope>NUCLEOTIDE SEQUENCE [LARGE SCALE GENOMIC DNA]</scope>
    <source>
        <strain>ATCC 17023 / DSM 158 / JCM 6121 / CCUG 31486 / LMG 2827 / NBRC 12203 / NCIMB 8253 / ATH 2.4.1.</strain>
    </source>
</reference>
<keyword id="KW-0028">Amino-acid biosynthesis</keyword>
<keyword id="KW-0057">Aromatic amino acid biosynthesis</keyword>
<keyword id="KW-0067">ATP-binding</keyword>
<keyword id="KW-0963">Cytoplasm</keyword>
<keyword id="KW-0418">Kinase</keyword>
<keyword id="KW-0460">Magnesium</keyword>
<keyword id="KW-0479">Metal-binding</keyword>
<keyword id="KW-0547">Nucleotide-binding</keyword>
<keyword id="KW-1185">Reference proteome</keyword>
<keyword id="KW-0808">Transferase</keyword>
<gene>
    <name evidence="1" type="primary">aroK</name>
    <name type="ordered locus">RHOS4_14270</name>
    <name type="ORF">RSP_2817</name>
</gene>
<feature type="chain" id="PRO_0000237921" description="Shikimate kinase">
    <location>
        <begin position="1"/>
        <end position="199"/>
    </location>
</feature>
<feature type="binding site" evidence="1">
    <location>
        <begin position="34"/>
        <end position="39"/>
    </location>
    <ligand>
        <name>ATP</name>
        <dbReference type="ChEBI" id="CHEBI:30616"/>
    </ligand>
</feature>
<feature type="binding site" evidence="1">
    <location>
        <position position="38"/>
    </location>
    <ligand>
        <name>Mg(2+)</name>
        <dbReference type="ChEBI" id="CHEBI:18420"/>
    </ligand>
</feature>
<feature type="binding site" evidence="1">
    <location>
        <position position="56"/>
    </location>
    <ligand>
        <name>substrate</name>
    </ligand>
</feature>
<feature type="binding site" evidence="1">
    <location>
        <position position="80"/>
    </location>
    <ligand>
        <name>substrate</name>
    </ligand>
</feature>
<feature type="binding site" evidence="1">
    <location>
        <position position="102"/>
    </location>
    <ligand>
        <name>substrate</name>
    </ligand>
</feature>
<feature type="binding site" evidence="1">
    <location>
        <position position="140"/>
    </location>
    <ligand>
        <name>ATP</name>
        <dbReference type="ChEBI" id="CHEBI:30616"/>
    </ligand>
</feature>
<feature type="binding site" evidence="1">
    <location>
        <position position="159"/>
    </location>
    <ligand>
        <name>substrate</name>
    </ligand>
</feature>